<keyword id="KW-0004">4Fe-4S</keyword>
<keyword id="KW-0067">ATP-binding</keyword>
<keyword id="KW-0963">Cytoplasm</keyword>
<keyword id="KW-0408">Iron</keyword>
<keyword id="KW-0411">Iron-sulfur</keyword>
<keyword id="KW-0460">Magnesium</keyword>
<keyword id="KW-0479">Metal-binding</keyword>
<keyword id="KW-0547">Nucleotide-binding</keyword>
<keyword id="KW-1185">Reference proteome</keyword>
<keyword id="KW-0694">RNA-binding</keyword>
<keyword id="KW-0808">Transferase</keyword>
<keyword id="KW-0819">tRNA processing</keyword>
<keyword id="KW-0820">tRNA-binding</keyword>
<accession>B2VKN8</accession>
<evidence type="ECO:0000255" key="1">
    <source>
        <dbReference type="HAMAP-Rule" id="MF_01850"/>
    </source>
</evidence>
<dbReference type="EC" id="2.8.1.-" evidence="1"/>
<dbReference type="EMBL" id="CU468135">
    <property type="protein sequence ID" value="CAO96701.1"/>
    <property type="molecule type" value="Genomic_DNA"/>
</dbReference>
<dbReference type="RefSeq" id="WP_012441394.1">
    <property type="nucleotide sequence ID" value="NC_010694.1"/>
</dbReference>
<dbReference type="SMR" id="B2VKN8"/>
<dbReference type="STRING" id="465817.ETA_16550"/>
<dbReference type="KEGG" id="eta:ETA_16550"/>
<dbReference type="eggNOG" id="COG0037">
    <property type="taxonomic scope" value="Bacteria"/>
</dbReference>
<dbReference type="HOGENOM" id="CLU_026481_0_0_6"/>
<dbReference type="OrthoDB" id="9801054at2"/>
<dbReference type="Proteomes" id="UP000001726">
    <property type="component" value="Chromosome"/>
</dbReference>
<dbReference type="GO" id="GO:0005737">
    <property type="term" value="C:cytoplasm"/>
    <property type="evidence" value="ECO:0007669"/>
    <property type="project" value="UniProtKB-SubCell"/>
</dbReference>
<dbReference type="GO" id="GO:0051539">
    <property type="term" value="F:4 iron, 4 sulfur cluster binding"/>
    <property type="evidence" value="ECO:0007669"/>
    <property type="project" value="UniProtKB-UniRule"/>
</dbReference>
<dbReference type="GO" id="GO:0005524">
    <property type="term" value="F:ATP binding"/>
    <property type="evidence" value="ECO:0007669"/>
    <property type="project" value="UniProtKB-UniRule"/>
</dbReference>
<dbReference type="GO" id="GO:0000287">
    <property type="term" value="F:magnesium ion binding"/>
    <property type="evidence" value="ECO:0007669"/>
    <property type="project" value="UniProtKB-UniRule"/>
</dbReference>
<dbReference type="GO" id="GO:0016783">
    <property type="term" value="F:sulfurtransferase activity"/>
    <property type="evidence" value="ECO:0007669"/>
    <property type="project" value="UniProtKB-UniRule"/>
</dbReference>
<dbReference type="GO" id="GO:0000049">
    <property type="term" value="F:tRNA binding"/>
    <property type="evidence" value="ECO:0007669"/>
    <property type="project" value="UniProtKB-KW"/>
</dbReference>
<dbReference type="GO" id="GO:0034227">
    <property type="term" value="P:tRNA thio-modification"/>
    <property type="evidence" value="ECO:0007669"/>
    <property type="project" value="UniProtKB-UniRule"/>
</dbReference>
<dbReference type="CDD" id="cd24138">
    <property type="entry name" value="TtcA-like"/>
    <property type="match status" value="1"/>
</dbReference>
<dbReference type="Gene3D" id="3.40.50.620">
    <property type="entry name" value="HUPs"/>
    <property type="match status" value="1"/>
</dbReference>
<dbReference type="HAMAP" id="MF_01850">
    <property type="entry name" value="TtcA"/>
    <property type="match status" value="1"/>
</dbReference>
<dbReference type="InterPro" id="IPR014729">
    <property type="entry name" value="Rossmann-like_a/b/a_fold"/>
</dbReference>
<dbReference type="InterPro" id="IPR011063">
    <property type="entry name" value="TilS/TtcA_N"/>
</dbReference>
<dbReference type="InterPro" id="IPR012089">
    <property type="entry name" value="tRNA_Cyd_32_2_STrfase"/>
</dbReference>
<dbReference type="InterPro" id="IPR035107">
    <property type="entry name" value="tRNA_thiolation_TtcA_Ctu1"/>
</dbReference>
<dbReference type="NCBIfam" id="NF007972">
    <property type="entry name" value="PRK10696.1"/>
    <property type="match status" value="1"/>
</dbReference>
<dbReference type="PANTHER" id="PTHR43686:SF1">
    <property type="entry name" value="AMINOTRAN_5 DOMAIN-CONTAINING PROTEIN"/>
    <property type="match status" value="1"/>
</dbReference>
<dbReference type="PANTHER" id="PTHR43686">
    <property type="entry name" value="SULFURTRANSFERASE-RELATED"/>
    <property type="match status" value="1"/>
</dbReference>
<dbReference type="Pfam" id="PF01171">
    <property type="entry name" value="ATP_bind_3"/>
    <property type="match status" value="1"/>
</dbReference>
<dbReference type="PIRSF" id="PIRSF004976">
    <property type="entry name" value="ATPase_YdaO"/>
    <property type="match status" value="1"/>
</dbReference>
<dbReference type="SUPFAM" id="SSF52402">
    <property type="entry name" value="Adenine nucleotide alpha hydrolases-like"/>
    <property type="match status" value="1"/>
</dbReference>
<feature type="chain" id="PRO_1000188642" description="tRNA-cytidine(32) 2-sulfurtransferase">
    <location>
        <begin position="1"/>
        <end position="309"/>
    </location>
</feature>
<feature type="short sequence motif" description="PP-loop motif" evidence="1">
    <location>
        <begin position="47"/>
        <end position="52"/>
    </location>
</feature>
<feature type="binding site" evidence="1">
    <location>
        <position position="122"/>
    </location>
    <ligand>
        <name>[4Fe-4S] cluster</name>
        <dbReference type="ChEBI" id="CHEBI:49883"/>
    </ligand>
</feature>
<feature type="binding site" evidence="1">
    <location>
        <position position="125"/>
    </location>
    <ligand>
        <name>[4Fe-4S] cluster</name>
        <dbReference type="ChEBI" id="CHEBI:49883"/>
    </ligand>
</feature>
<feature type="binding site" evidence="1">
    <location>
        <position position="213"/>
    </location>
    <ligand>
        <name>[4Fe-4S] cluster</name>
        <dbReference type="ChEBI" id="CHEBI:49883"/>
    </ligand>
</feature>
<proteinExistence type="inferred from homology"/>
<protein>
    <recommendedName>
        <fullName evidence="1">tRNA-cytidine(32) 2-sulfurtransferase</fullName>
        <ecNumber evidence="1">2.8.1.-</ecNumber>
    </recommendedName>
    <alternativeName>
        <fullName evidence="1">Two-thiocytidine biosynthesis protein A</fullName>
    </alternativeName>
    <alternativeName>
        <fullName evidence="1">tRNA 2-thiocytidine biosynthesis protein TtcA</fullName>
    </alternativeName>
</protein>
<organism>
    <name type="scientific">Erwinia tasmaniensis (strain DSM 17950 / CFBP 7177 / CIP 109463 / NCPPB 4357 / Et1/99)</name>
    <dbReference type="NCBI Taxonomy" id="465817"/>
    <lineage>
        <taxon>Bacteria</taxon>
        <taxon>Pseudomonadati</taxon>
        <taxon>Pseudomonadota</taxon>
        <taxon>Gammaproteobacteria</taxon>
        <taxon>Enterobacterales</taxon>
        <taxon>Erwiniaceae</taxon>
        <taxon>Erwinia</taxon>
    </lineage>
</organism>
<gene>
    <name evidence="1" type="primary">ttcA</name>
    <name type="ordered locus">ETA_16550</name>
</gene>
<sequence>MQSNQENSKKGQYNLNKLQKRLRRNVGEAIADFNMIEEGDRIMVCLSGGKDSYTMLEILRNLQQSAPISFSLVAVNLDQKQPGFPAHILPEYLEQQGVEYKIVDEDTYSIVKEKIPEGKTTCSLCSRLRRGILYRTASELGCTKIALGHHRDDILQTLFLNMFYGGKMKGMPPKLMSDDGQHIVIRPLAYCREKDIERFAIARQYPIIPCNLCGSQPNLQRQVIGDMLRDWDKRYPGRIETMFTAMQNVVPSHLADADLFDFKQIRHGSEVIDGGDLAFDRETLPLQPSAWQPEEDEATPARLDVVQIR</sequence>
<reference key="1">
    <citation type="journal article" date="2008" name="Environ. Microbiol.">
        <title>The genome of Erwinia tasmaniensis strain Et1/99, a non-pathogenic bacterium in the genus Erwinia.</title>
        <authorList>
            <person name="Kube M."/>
            <person name="Migdoll A.M."/>
            <person name="Mueller I."/>
            <person name="Kuhl H."/>
            <person name="Beck A."/>
            <person name="Reinhardt R."/>
            <person name="Geider K."/>
        </authorList>
    </citation>
    <scope>NUCLEOTIDE SEQUENCE [LARGE SCALE GENOMIC DNA]</scope>
    <source>
        <strain>DSM 17950 / CFBP 7177 / CIP 109463 / NCPPB 4357 / Et1/99</strain>
    </source>
</reference>
<comment type="function">
    <text evidence="1">Catalyzes the ATP-dependent 2-thiolation of cytidine in position 32 of tRNA, to form 2-thiocytidine (s(2)C32). The sulfur atoms are provided by the cysteine/cysteine desulfurase (IscS) system.</text>
</comment>
<comment type="catalytic activity">
    <reaction evidence="1">
        <text>cytidine(32) in tRNA + S-sulfanyl-L-cysteinyl-[cysteine desulfurase] + AH2 + ATP = 2-thiocytidine(32) in tRNA + L-cysteinyl-[cysteine desulfurase] + A + AMP + diphosphate + H(+)</text>
        <dbReference type="Rhea" id="RHEA:57048"/>
        <dbReference type="Rhea" id="RHEA-COMP:10288"/>
        <dbReference type="Rhea" id="RHEA-COMP:12157"/>
        <dbReference type="Rhea" id="RHEA-COMP:12158"/>
        <dbReference type="Rhea" id="RHEA-COMP:14821"/>
        <dbReference type="ChEBI" id="CHEBI:13193"/>
        <dbReference type="ChEBI" id="CHEBI:15378"/>
        <dbReference type="ChEBI" id="CHEBI:17499"/>
        <dbReference type="ChEBI" id="CHEBI:29950"/>
        <dbReference type="ChEBI" id="CHEBI:30616"/>
        <dbReference type="ChEBI" id="CHEBI:33019"/>
        <dbReference type="ChEBI" id="CHEBI:61963"/>
        <dbReference type="ChEBI" id="CHEBI:82748"/>
        <dbReference type="ChEBI" id="CHEBI:141453"/>
        <dbReference type="ChEBI" id="CHEBI:456215"/>
    </reaction>
    <physiologicalReaction direction="left-to-right" evidence="1">
        <dbReference type="Rhea" id="RHEA:57049"/>
    </physiologicalReaction>
</comment>
<comment type="cofactor">
    <cofactor evidence="1">
        <name>Mg(2+)</name>
        <dbReference type="ChEBI" id="CHEBI:18420"/>
    </cofactor>
</comment>
<comment type="cofactor">
    <cofactor evidence="1">
        <name>[4Fe-4S] cluster</name>
        <dbReference type="ChEBI" id="CHEBI:49883"/>
    </cofactor>
    <text evidence="1">Binds 1 [4Fe-4S] cluster per subunit. The cluster is chelated by three Cys residues, the fourth Fe has a free coordination site that may bind a sulfur atom transferred from the persulfide of IscS.</text>
</comment>
<comment type="pathway">
    <text evidence="1">tRNA modification.</text>
</comment>
<comment type="subunit">
    <text evidence="1">Homodimer.</text>
</comment>
<comment type="subcellular location">
    <subcellularLocation>
        <location evidence="1">Cytoplasm</location>
    </subcellularLocation>
</comment>
<comment type="miscellaneous">
    <text evidence="1">The thiolation reaction likely consists of two steps: a first activation step by ATP to form an adenylated intermediate of the target base of tRNA, and a second nucleophilic substitution step of the sulfur (S) atom supplied by the hydrosulfide attached to the Fe-S cluster.</text>
</comment>
<comment type="similarity">
    <text evidence="1">Belongs to the TtcA family.</text>
</comment>
<name>TTCA_ERWT9</name>